<gene>
    <name type="primary">ACL1.A1</name>
</gene>
<proteinExistence type="evidence at transcript level"/>
<dbReference type="EMBL" id="X16114">
    <property type="protein sequence ID" value="CAA34247.1"/>
    <property type="molecule type" value="Genomic_DNA"/>
</dbReference>
<dbReference type="EMBL" id="X13128">
    <property type="protein sequence ID" value="CAA31519.1"/>
    <property type="molecule type" value="mRNA"/>
</dbReference>
<dbReference type="PIR" id="S01257">
    <property type="entry name" value="S01257"/>
</dbReference>
<dbReference type="RefSeq" id="XP_013750679.1">
    <property type="nucleotide sequence ID" value="XM_013895225.1"/>
</dbReference>
<dbReference type="SMR" id="P10352"/>
<dbReference type="GeneID" id="106453012"/>
<dbReference type="KEGG" id="bna:106453012"/>
<dbReference type="OrthoDB" id="448946at2759"/>
<dbReference type="UniPathway" id="UPA00094"/>
<dbReference type="GO" id="GO:0009507">
    <property type="term" value="C:chloroplast"/>
    <property type="evidence" value="ECO:0007669"/>
    <property type="project" value="UniProtKB-SubCell"/>
</dbReference>
<dbReference type="GO" id="GO:0000036">
    <property type="term" value="F:acyl carrier activity"/>
    <property type="evidence" value="ECO:0007669"/>
    <property type="project" value="InterPro"/>
</dbReference>
<dbReference type="GO" id="GO:0031177">
    <property type="term" value="F:phosphopantetheine binding"/>
    <property type="evidence" value="ECO:0007669"/>
    <property type="project" value="InterPro"/>
</dbReference>
<dbReference type="FunFam" id="1.10.1200.10:FF:000017">
    <property type="entry name" value="Acyl carrier protein"/>
    <property type="match status" value="1"/>
</dbReference>
<dbReference type="Gene3D" id="1.10.1200.10">
    <property type="entry name" value="ACP-like"/>
    <property type="match status" value="1"/>
</dbReference>
<dbReference type="HAMAP" id="MF_01217">
    <property type="entry name" value="Acyl_carrier"/>
    <property type="match status" value="1"/>
</dbReference>
<dbReference type="InterPro" id="IPR003231">
    <property type="entry name" value="ACP"/>
</dbReference>
<dbReference type="InterPro" id="IPR036736">
    <property type="entry name" value="ACP-like_sf"/>
</dbReference>
<dbReference type="InterPro" id="IPR044813">
    <property type="entry name" value="ACP_chloroplastic"/>
</dbReference>
<dbReference type="InterPro" id="IPR020806">
    <property type="entry name" value="PKS_PP-bd"/>
</dbReference>
<dbReference type="InterPro" id="IPR009081">
    <property type="entry name" value="PP-bd_ACP"/>
</dbReference>
<dbReference type="InterPro" id="IPR006162">
    <property type="entry name" value="Ppantetheine_attach_site"/>
</dbReference>
<dbReference type="NCBIfam" id="TIGR00517">
    <property type="entry name" value="acyl_carrier"/>
    <property type="match status" value="1"/>
</dbReference>
<dbReference type="NCBIfam" id="NF002148">
    <property type="entry name" value="PRK00982.1-2"/>
    <property type="match status" value="1"/>
</dbReference>
<dbReference type="PANTHER" id="PTHR46153">
    <property type="entry name" value="ACYL CARRIER PROTEIN"/>
    <property type="match status" value="1"/>
</dbReference>
<dbReference type="PANTHER" id="PTHR46153:SF9">
    <property type="entry name" value="ACYL CARRIER PROTEIN 1, CHLOROPLASTIC"/>
    <property type="match status" value="1"/>
</dbReference>
<dbReference type="Pfam" id="PF00550">
    <property type="entry name" value="PP-binding"/>
    <property type="match status" value="1"/>
</dbReference>
<dbReference type="SMART" id="SM00823">
    <property type="entry name" value="PKS_PP"/>
    <property type="match status" value="1"/>
</dbReference>
<dbReference type="SUPFAM" id="SSF47336">
    <property type="entry name" value="ACP-like"/>
    <property type="match status" value="1"/>
</dbReference>
<dbReference type="PROSITE" id="PS50075">
    <property type="entry name" value="CARRIER"/>
    <property type="match status" value="1"/>
</dbReference>
<dbReference type="PROSITE" id="PS00012">
    <property type="entry name" value="PHOSPHOPANTETHEINE"/>
    <property type="match status" value="1"/>
</dbReference>
<accession>P10352</accession>
<reference key="1">
    <citation type="journal article" date="1990" name="Plant Mol. Biol.">
        <title>The isolation and sequence analysis of two seed-expressed acyl carrier protein genes from Brassica napus.</title>
        <authorList>
            <person name="de Silva J."/>
            <person name="Loader N.M."/>
            <person name="Jarman C."/>
            <person name="Windust J.H.C."/>
            <person name="Hughes S.G."/>
            <person name="Safford R."/>
        </authorList>
    </citation>
    <scope>NUCLEOTIDE SEQUENCE</scope>
    <source>
        <strain>cv. Jet neuf</strain>
        <tissue>Embryo</tissue>
    </source>
</reference>
<reference key="2">
    <citation type="journal article" date="1988" name="Eur. J. Biochem.">
        <title>Plastid-localised seed acyl-carrier protein of Brassica napus is encoded by a distinct, nuclear multigene family.</title>
        <authorList>
            <person name="Safford R."/>
            <person name="Windust J.H.C."/>
            <person name="Lucas C."/>
            <person name="de Silva J."/>
            <person name="James C.M."/>
            <person name="Hellyer A."/>
            <person name="Smith C.G."/>
            <person name="Slabas A.R."/>
            <person name="Hughes S.G."/>
        </authorList>
    </citation>
    <scope>NUCLEOTIDE SEQUENCE [MRNA]</scope>
    <source>
        <strain>cv. Jet neuf</strain>
        <tissue>Seed</tissue>
    </source>
</reference>
<reference key="3">
    <citation type="journal article" date="1994" name="Plant Mol. Biol. Rep.">
        <title>Nomenclature for genes encoding acyl carrier protein (ACP).</title>
        <authorList>
            <person name="von Wettstein-Knowles P."/>
            <person name="Knauf V."/>
            <person name="Ohlrogge J.B."/>
            <person name="Lamppa G."/>
            <person name="Safford R."/>
            <person name="Souciet G."/>
        </authorList>
    </citation>
    <scope>NOMENCLATURE</scope>
</reference>
<comment type="function">
    <text>Carrier of the growing fatty acid chain in fatty acid biosynthesis.</text>
</comment>
<comment type="pathway">
    <text>Lipid metabolism; fatty acid biosynthesis.</text>
</comment>
<comment type="subcellular location">
    <subcellularLocation>
        <location>Plastid</location>
        <location>Chloroplast</location>
    </subcellularLocation>
</comment>
<comment type="tissue specificity">
    <text>Seed.</text>
</comment>
<comment type="PTM">
    <text evidence="1">4'-phosphopantetheine is transferred from CoA to a specific serine of apo-ACP by acpS. This modification is essential for activity because fatty acids are bound in thioester linkage to the sulfhydryl of the prosthetic group (By similarity).</text>
</comment>
<comment type="miscellaneous">
    <text>In rape seeds ACP is coded by two multigene families. There are probably a total of 35 genes.</text>
</comment>
<comment type="similarity">
    <text evidence="3">Belongs to the acyl carrier protein (ACP) family.</text>
</comment>
<organism>
    <name type="scientific">Brassica napus</name>
    <name type="common">Rape</name>
    <dbReference type="NCBI Taxonomy" id="3708"/>
    <lineage>
        <taxon>Eukaryota</taxon>
        <taxon>Viridiplantae</taxon>
        <taxon>Streptophyta</taxon>
        <taxon>Embryophyta</taxon>
        <taxon>Tracheophyta</taxon>
        <taxon>Spermatophyta</taxon>
        <taxon>Magnoliopsida</taxon>
        <taxon>eudicotyledons</taxon>
        <taxon>Gunneridae</taxon>
        <taxon>Pentapetalae</taxon>
        <taxon>rosids</taxon>
        <taxon>malvids</taxon>
        <taxon>Brassicales</taxon>
        <taxon>Brassicaceae</taxon>
        <taxon>Brassiceae</taxon>
        <taxon>Brassica</taxon>
    </lineage>
</organism>
<sequence>MSTTFCSSVSMQATSLAATTRISFQKPALVSRTNLSFNLSRSIPTRLSVSCAAKPETVEKVSKIVKKQLSLKDDQNVVAETKFADLGADSLDTVEIVMGLEEEFHIEMAEEKAQKITTVEEAAELIDELVQAKK</sequence>
<feature type="transit peptide" description="Chloroplast">
    <location>
        <begin position="1"/>
        <end position="51"/>
    </location>
</feature>
<feature type="chain" id="PRO_0000000572" description="Acyl carrier protein, chloroplastic">
    <location>
        <begin position="52"/>
        <end position="134"/>
    </location>
</feature>
<feature type="domain" description="Carrier" evidence="2">
    <location>
        <begin position="55"/>
        <end position="130"/>
    </location>
</feature>
<feature type="modified residue" description="O-(pantetheine 4'-phosphoryl)serine" evidence="2">
    <location>
        <position position="90"/>
    </location>
</feature>
<feature type="sequence conflict" description="In Ref. 2; CAA31519." evidence="3" ref="2">
    <original>E</original>
    <variation>D</variation>
    <location>
        <position position="101"/>
    </location>
</feature>
<feature type="sequence conflict" description="In Ref. 2; CAA31519." evidence="3" ref="2">
    <original>H</original>
    <variation>D</variation>
    <location>
        <position position="105"/>
    </location>
</feature>
<protein>
    <recommendedName>
        <fullName>Acyl carrier protein, chloroplastic</fullName>
    </recommendedName>
    <alternativeName>
        <fullName>ACP05</fullName>
        <shortName>ACP</shortName>
    </alternativeName>
    <alternativeName>
        <fullName>Clone 29C08</fullName>
    </alternativeName>
</protein>
<keyword id="KW-0150">Chloroplast</keyword>
<keyword id="KW-0275">Fatty acid biosynthesis</keyword>
<keyword id="KW-0276">Fatty acid metabolism</keyword>
<keyword id="KW-0444">Lipid biosynthesis</keyword>
<keyword id="KW-0443">Lipid metabolism</keyword>
<keyword id="KW-0596">Phosphopantetheine</keyword>
<keyword id="KW-0597">Phosphoprotein</keyword>
<keyword id="KW-0934">Plastid</keyword>
<keyword id="KW-0809">Transit peptide</keyword>
<name>ACP1_BRANA</name>
<evidence type="ECO:0000250" key="1"/>
<evidence type="ECO:0000255" key="2">
    <source>
        <dbReference type="PROSITE-ProRule" id="PRU00258"/>
    </source>
</evidence>
<evidence type="ECO:0000305" key="3"/>